<dbReference type="EC" id="5.3.1.9" evidence="1"/>
<dbReference type="EMBL" id="CP000282">
    <property type="protein sequence ID" value="ABD80268.1"/>
    <property type="molecule type" value="Genomic_DNA"/>
</dbReference>
<dbReference type="RefSeq" id="WP_011467488.1">
    <property type="nucleotide sequence ID" value="NC_007912.1"/>
</dbReference>
<dbReference type="SMR" id="Q21M11"/>
<dbReference type="STRING" id="203122.Sde_1006"/>
<dbReference type="GeneID" id="98612690"/>
<dbReference type="KEGG" id="sde:Sde_1006"/>
<dbReference type="eggNOG" id="COG0166">
    <property type="taxonomic scope" value="Bacteria"/>
</dbReference>
<dbReference type="HOGENOM" id="CLU_017947_3_1_6"/>
<dbReference type="OrthoDB" id="140919at2"/>
<dbReference type="UniPathway" id="UPA00109">
    <property type="reaction ID" value="UER00181"/>
</dbReference>
<dbReference type="UniPathway" id="UPA00138"/>
<dbReference type="Proteomes" id="UP000001947">
    <property type="component" value="Chromosome"/>
</dbReference>
<dbReference type="GO" id="GO:0005829">
    <property type="term" value="C:cytosol"/>
    <property type="evidence" value="ECO:0007669"/>
    <property type="project" value="TreeGrafter"/>
</dbReference>
<dbReference type="GO" id="GO:0097367">
    <property type="term" value="F:carbohydrate derivative binding"/>
    <property type="evidence" value="ECO:0007669"/>
    <property type="project" value="InterPro"/>
</dbReference>
<dbReference type="GO" id="GO:0004347">
    <property type="term" value="F:glucose-6-phosphate isomerase activity"/>
    <property type="evidence" value="ECO:0007669"/>
    <property type="project" value="UniProtKB-UniRule"/>
</dbReference>
<dbReference type="GO" id="GO:0048029">
    <property type="term" value="F:monosaccharide binding"/>
    <property type="evidence" value="ECO:0007669"/>
    <property type="project" value="TreeGrafter"/>
</dbReference>
<dbReference type="GO" id="GO:0006094">
    <property type="term" value="P:gluconeogenesis"/>
    <property type="evidence" value="ECO:0007669"/>
    <property type="project" value="UniProtKB-UniRule"/>
</dbReference>
<dbReference type="GO" id="GO:0051156">
    <property type="term" value="P:glucose 6-phosphate metabolic process"/>
    <property type="evidence" value="ECO:0007669"/>
    <property type="project" value="TreeGrafter"/>
</dbReference>
<dbReference type="GO" id="GO:0006096">
    <property type="term" value="P:glycolytic process"/>
    <property type="evidence" value="ECO:0007669"/>
    <property type="project" value="UniProtKB-UniRule"/>
</dbReference>
<dbReference type="CDD" id="cd05015">
    <property type="entry name" value="SIS_PGI_1"/>
    <property type="match status" value="1"/>
</dbReference>
<dbReference type="CDD" id="cd05016">
    <property type="entry name" value="SIS_PGI_2"/>
    <property type="match status" value="1"/>
</dbReference>
<dbReference type="Gene3D" id="1.10.1390.10">
    <property type="match status" value="1"/>
</dbReference>
<dbReference type="Gene3D" id="3.40.50.10490">
    <property type="entry name" value="Glucose-6-phosphate isomerase like protein, domain 1"/>
    <property type="match status" value="2"/>
</dbReference>
<dbReference type="HAMAP" id="MF_00473">
    <property type="entry name" value="G6P_isomerase"/>
    <property type="match status" value="1"/>
</dbReference>
<dbReference type="InterPro" id="IPR001672">
    <property type="entry name" value="G6P_Isomerase"/>
</dbReference>
<dbReference type="InterPro" id="IPR023096">
    <property type="entry name" value="G6P_Isomerase_C"/>
</dbReference>
<dbReference type="InterPro" id="IPR018189">
    <property type="entry name" value="Phosphoglucose_isomerase_CS"/>
</dbReference>
<dbReference type="InterPro" id="IPR046348">
    <property type="entry name" value="SIS_dom_sf"/>
</dbReference>
<dbReference type="InterPro" id="IPR035476">
    <property type="entry name" value="SIS_PGI_1"/>
</dbReference>
<dbReference type="InterPro" id="IPR035482">
    <property type="entry name" value="SIS_PGI_2"/>
</dbReference>
<dbReference type="NCBIfam" id="NF001211">
    <property type="entry name" value="PRK00179.1"/>
    <property type="match status" value="1"/>
</dbReference>
<dbReference type="PANTHER" id="PTHR11469">
    <property type="entry name" value="GLUCOSE-6-PHOSPHATE ISOMERASE"/>
    <property type="match status" value="1"/>
</dbReference>
<dbReference type="PANTHER" id="PTHR11469:SF1">
    <property type="entry name" value="GLUCOSE-6-PHOSPHATE ISOMERASE"/>
    <property type="match status" value="1"/>
</dbReference>
<dbReference type="Pfam" id="PF00342">
    <property type="entry name" value="PGI"/>
    <property type="match status" value="1"/>
</dbReference>
<dbReference type="PRINTS" id="PR00662">
    <property type="entry name" value="G6PISOMERASE"/>
</dbReference>
<dbReference type="SUPFAM" id="SSF53697">
    <property type="entry name" value="SIS domain"/>
    <property type="match status" value="1"/>
</dbReference>
<dbReference type="PROSITE" id="PS00765">
    <property type="entry name" value="P_GLUCOSE_ISOMERASE_1"/>
    <property type="match status" value="1"/>
</dbReference>
<dbReference type="PROSITE" id="PS00174">
    <property type="entry name" value="P_GLUCOSE_ISOMERASE_2"/>
    <property type="match status" value="1"/>
</dbReference>
<dbReference type="PROSITE" id="PS51463">
    <property type="entry name" value="P_GLUCOSE_ISOMERASE_3"/>
    <property type="match status" value="1"/>
</dbReference>
<proteinExistence type="inferred from homology"/>
<sequence length="547" mass="60371">MQAKTLADLYSDWDKVQAHAQAWQKRTLKDAFDADRNRAARYSVGAAGLELDFSKNHIDDETLQLLMGVADQANLKAAIKKLLRGDHVNNTEDRPALHSALRFQGKPQTAEHQEVKATLDKMAKLIKSVHSGEWKGYKGEKITDVVNIGIGGSDLGPRMITKALTPFHTGDVKVHFVANIDGAEIHDLTRGLNPSTTLFLVASKSFSTLETLENSLTARKWMLDNGCAQDQLAKHFVAISSKVEKAVEFGIAAENVYPIWDWVGGRYSLWSAIGMPIAFAIGMDNFNKLRAGAAAMDDHFAEAPLERNIPALMGLLMFWYSSCLGTDTQAILPYAYHLQLLPAYLQQLEMESNGKSVTKSGERVDYQTGSIVWGTEGTNGQHSFHQLLHQGTTMVPIDFIATLQAHHPLDHQHKFLFANCVAQSQALMTGRDQATSEAEMRAQGMSDEQIAELAPHKVHPGNRPSNTILMDKLTPETLGALIAAYEHKVYTLGVLWNINSFDQWGVELGKLLGTHVATAIDTTDIPSDWDSSTQTLVKKFTEANKNL</sequence>
<evidence type="ECO:0000255" key="1">
    <source>
        <dbReference type="HAMAP-Rule" id="MF_00473"/>
    </source>
</evidence>
<accession>Q21M11</accession>
<keyword id="KW-0963">Cytoplasm</keyword>
<keyword id="KW-0312">Gluconeogenesis</keyword>
<keyword id="KW-0324">Glycolysis</keyword>
<keyword id="KW-0413">Isomerase</keyword>
<keyword id="KW-1185">Reference proteome</keyword>
<gene>
    <name evidence="1" type="primary">pgi</name>
    <name type="ordered locus">Sde_1006</name>
</gene>
<feature type="chain" id="PRO_0000252644" description="Glucose-6-phosphate isomerase">
    <location>
        <begin position="1"/>
        <end position="547"/>
    </location>
</feature>
<feature type="active site" description="Proton donor" evidence="1">
    <location>
        <position position="351"/>
    </location>
</feature>
<feature type="active site" evidence="1">
    <location>
        <position position="382"/>
    </location>
</feature>
<feature type="active site" evidence="1">
    <location>
        <position position="510"/>
    </location>
</feature>
<comment type="function">
    <text evidence="1">Catalyzes the reversible isomerization of glucose-6-phosphate to fructose-6-phosphate.</text>
</comment>
<comment type="catalytic activity">
    <reaction evidence="1">
        <text>alpha-D-glucose 6-phosphate = beta-D-fructose 6-phosphate</text>
        <dbReference type="Rhea" id="RHEA:11816"/>
        <dbReference type="ChEBI" id="CHEBI:57634"/>
        <dbReference type="ChEBI" id="CHEBI:58225"/>
        <dbReference type="EC" id="5.3.1.9"/>
    </reaction>
</comment>
<comment type="pathway">
    <text evidence="1">Carbohydrate biosynthesis; gluconeogenesis.</text>
</comment>
<comment type="pathway">
    <text evidence="1">Carbohydrate degradation; glycolysis; D-glyceraldehyde 3-phosphate and glycerone phosphate from D-glucose: step 2/4.</text>
</comment>
<comment type="subcellular location">
    <subcellularLocation>
        <location evidence="1">Cytoplasm</location>
    </subcellularLocation>
</comment>
<comment type="similarity">
    <text evidence="1">Belongs to the GPI family.</text>
</comment>
<reference key="1">
    <citation type="journal article" date="2008" name="PLoS Genet.">
        <title>Complete genome sequence of the complex carbohydrate-degrading marine bacterium, Saccharophagus degradans strain 2-40 T.</title>
        <authorList>
            <person name="Weiner R.M."/>
            <person name="Taylor L.E. II"/>
            <person name="Henrissat B."/>
            <person name="Hauser L."/>
            <person name="Land M."/>
            <person name="Coutinho P.M."/>
            <person name="Rancurel C."/>
            <person name="Saunders E.H."/>
            <person name="Longmire A.G."/>
            <person name="Zhang H."/>
            <person name="Bayer E.A."/>
            <person name="Gilbert H.J."/>
            <person name="Larimer F."/>
            <person name="Zhulin I.B."/>
            <person name="Ekborg N.A."/>
            <person name="Lamed R."/>
            <person name="Richardson P.M."/>
            <person name="Borovok I."/>
            <person name="Hutcheson S."/>
        </authorList>
    </citation>
    <scope>NUCLEOTIDE SEQUENCE [LARGE SCALE GENOMIC DNA]</scope>
    <source>
        <strain>2-40 / ATCC 43961 / DSM 17024</strain>
    </source>
</reference>
<protein>
    <recommendedName>
        <fullName evidence="1">Glucose-6-phosphate isomerase</fullName>
        <shortName evidence="1">GPI</shortName>
        <ecNumber evidence="1">5.3.1.9</ecNumber>
    </recommendedName>
    <alternativeName>
        <fullName evidence="1">Phosphoglucose isomerase</fullName>
        <shortName evidence="1">PGI</shortName>
    </alternativeName>
    <alternativeName>
        <fullName evidence="1">Phosphohexose isomerase</fullName>
        <shortName evidence="1">PHI</shortName>
    </alternativeName>
</protein>
<organism>
    <name type="scientific">Saccharophagus degradans (strain 2-40 / ATCC 43961 / DSM 17024)</name>
    <dbReference type="NCBI Taxonomy" id="203122"/>
    <lineage>
        <taxon>Bacteria</taxon>
        <taxon>Pseudomonadati</taxon>
        <taxon>Pseudomonadota</taxon>
        <taxon>Gammaproteobacteria</taxon>
        <taxon>Cellvibrionales</taxon>
        <taxon>Cellvibrionaceae</taxon>
        <taxon>Saccharophagus</taxon>
    </lineage>
</organism>
<name>G6PI_SACD2</name>